<name>POL_SIVM2</name>
<organism>
    <name type="scientific">Simian immunodeficiency virus (isolate Mm251)</name>
    <name type="common">SIV-mac</name>
    <name type="synonym">Simian immunodeficiency virus rhesus monkey</name>
    <dbReference type="NCBI Taxonomy" id="11734"/>
    <lineage>
        <taxon>Viruses</taxon>
        <taxon>Riboviria</taxon>
        <taxon>Pararnavirae</taxon>
        <taxon>Artverviricota</taxon>
        <taxon>Revtraviricetes</taxon>
        <taxon>Ortervirales</taxon>
        <taxon>Retroviridae</taxon>
        <taxon>Orthoretrovirinae</taxon>
        <taxon>Lentivirus</taxon>
        <taxon>Simian immunodeficiency virus</taxon>
    </lineage>
</organism>
<accession>P05897</accession>
<dbReference type="EC" id="3.4.23.16"/>
<dbReference type="EC" id="2.7.7.49"/>
<dbReference type="EC" id="2.7.7.7"/>
<dbReference type="EC" id="3.1.26.13"/>
<dbReference type="EC" id="3.1.13.2"/>
<dbReference type="EC" id="2.7.7.-" evidence="4"/>
<dbReference type="EC" id="3.1.-.-" evidence="4"/>
<dbReference type="EMBL" id="M19499">
    <property type="protein sequence ID" value="AAB59906.1"/>
    <property type="status" value="ALT_SEQ"/>
    <property type="molecule type" value="Genomic_RNA"/>
</dbReference>
<dbReference type="PDB" id="1C6V">
    <property type="method" value="X-ray"/>
    <property type="resolution" value="3.00 A"/>
    <property type="chains" value="X=1368-1448"/>
</dbReference>
<dbReference type="PDB" id="1ECW">
    <property type="method" value="X-ray"/>
    <property type="resolution" value="2.20 A"/>
    <property type="chains" value="A=1-135"/>
</dbReference>
<dbReference type="PDB" id="1ED1">
    <property type="method" value="X-ray"/>
    <property type="resolution" value="2.10 A"/>
    <property type="chains" value="A=1-135"/>
</dbReference>
<dbReference type="PDBsum" id="1C6V"/>
<dbReference type="PDBsum" id="1ECW"/>
<dbReference type="PDBsum" id="1ED1"/>
<dbReference type="SMR" id="P05897"/>
<dbReference type="EvolutionaryTrace" id="P05897"/>
<dbReference type="PRO" id="PR:P05897"/>
<dbReference type="Proteomes" id="UP000258290">
    <property type="component" value="Segment"/>
</dbReference>
<dbReference type="GO" id="GO:0043657">
    <property type="term" value="C:host cell"/>
    <property type="evidence" value="ECO:0007669"/>
    <property type="project" value="GOC"/>
</dbReference>
<dbReference type="GO" id="GO:0030430">
    <property type="term" value="C:host cell cytoplasm"/>
    <property type="evidence" value="ECO:0007669"/>
    <property type="project" value="UniProtKB-SubCell"/>
</dbReference>
<dbReference type="GO" id="GO:0042025">
    <property type="term" value="C:host cell nucleus"/>
    <property type="evidence" value="ECO:0007669"/>
    <property type="project" value="UniProtKB-SubCell"/>
</dbReference>
<dbReference type="GO" id="GO:0020002">
    <property type="term" value="C:host cell plasma membrane"/>
    <property type="evidence" value="ECO:0007669"/>
    <property type="project" value="UniProtKB-SubCell"/>
</dbReference>
<dbReference type="GO" id="GO:0016020">
    <property type="term" value="C:membrane"/>
    <property type="evidence" value="ECO:0007669"/>
    <property type="project" value="UniProtKB-KW"/>
</dbReference>
<dbReference type="GO" id="GO:0019013">
    <property type="term" value="C:viral nucleocapsid"/>
    <property type="evidence" value="ECO:0007669"/>
    <property type="project" value="UniProtKB-KW"/>
</dbReference>
<dbReference type="GO" id="GO:0004190">
    <property type="term" value="F:aspartic-type endopeptidase activity"/>
    <property type="evidence" value="ECO:0007669"/>
    <property type="project" value="UniProtKB-KW"/>
</dbReference>
<dbReference type="GO" id="GO:0003677">
    <property type="term" value="F:DNA binding"/>
    <property type="evidence" value="ECO:0007669"/>
    <property type="project" value="UniProtKB-KW"/>
</dbReference>
<dbReference type="GO" id="GO:0003887">
    <property type="term" value="F:DNA-directed DNA polymerase activity"/>
    <property type="evidence" value="ECO:0007669"/>
    <property type="project" value="UniProtKB-KW"/>
</dbReference>
<dbReference type="GO" id="GO:0004533">
    <property type="term" value="F:exoribonuclease H activity"/>
    <property type="evidence" value="ECO:0007669"/>
    <property type="project" value="UniProtKB-EC"/>
</dbReference>
<dbReference type="GO" id="GO:0035613">
    <property type="term" value="F:RNA stem-loop binding"/>
    <property type="evidence" value="ECO:0007669"/>
    <property type="project" value="TreeGrafter"/>
</dbReference>
<dbReference type="GO" id="GO:0003964">
    <property type="term" value="F:RNA-directed DNA polymerase activity"/>
    <property type="evidence" value="ECO:0007669"/>
    <property type="project" value="UniProtKB-KW"/>
</dbReference>
<dbReference type="GO" id="GO:0004523">
    <property type="term" value="F:RNA-DNA hybrid ribonuclease activity"/>
    <property type="evidence" value="ECO:0007669"/>
    <property type="project" value="InterPro"/>
</dbReference>
<dbReference type="GO" id="GO:0005198">
    <property type="term" value="F:structural molecule activity"/>
    <property type="evidence" value="ECO:0007669"/>
    <property type="project" value="InterPro"/>
</dbReference>
<dbReference type="GO" id="GO:0008270">
    <property type="term" value="F:zinc ion binding"/>
    <property type="evidence" value="ECO:0007669"/>
    <property type="project" value="UniProtKB-KW"/>
</dbReference>
<dbReference type="GO" id="GO:0015074">
    <property type="term" value="P:DNA integration"/>
    <property type="evidence" value="ECO:0007669"/>
    <property type="project" value="UniProtKB-KW"/>
</dbReference>
<dbReference type="GO" id="GO:0006310">
    <property type="term" value="P:DNA recombination"/>
    <property type="evidence" value="ECO:0007669"/>
    <property type="project" value="UniProtKB-KW"/>
</dbReference>
<dbReference type="GO" id="GO:0075713">
    <property type="term" value="P:establishment of integrated proviral latency"/>
    <property type="evidence" value="ECO:0007669"/>
    <property type="project" value="UniProtKB-KW"/>
</dbReference>
<dbReference type="GO" id="GO:0006508">
    <property type="term" value="P:proteolysis"/>
    <property type="evidence" value="ECO:0007669"/>
    <property type="project" value="UniProtKB-KW"/>
</dbReference>
<dbReference type="GO" id="GO:0046718">
    <property type="term" value="P:symbiont entry into host cell"/>
    <property type="evidence" value="ECO:0007669"/>
    <property type="project" value="UniProtKB-KW"/>
</dbReference>
<dbReference type="GO" id="GO:0039657">
    <property type="term" value="P:symbiont-mediated suppression of host gene expression"/>
    <property type="evidence" value="ECO:0007669"/>
    <property type="project" value="UniProtKB-KW"/>
</dbReference>
<dbReference type="GO" id="GO:0044826">
    <property type="term" value="P:viral genome integration into host DNA"/>
    <property type="evidence" value="ECO:0007669"/>
    <property type="project" value="UniProtKB-KW"/>
</dbReference>
<dbReference type="GO" id="GO:0075732">
    <property type="term" value="P:viral penetration into host nucleus"/>
    <property type="evidence" value="ECO:0007669"/>
    <property type="project" value="UniProtKB-KW"/>
</dbReference>
<dbReference type="GO" id="GO:0075523">
    <property type="term" value="P:viral translational frameshifting"/>
    <property type="evidence" value="ECO:0007669"/>
    <property type="project" value="UniProtKB-KW"/>
</dbReference>
<dbReference type="CDD" id="cd05482">
    <property type="entry name" value="HIV_retropepsin_like"/>
    <property type="match status" value="1"/>
</dbReference>
<dbReference type="Gene3D" id="1.10.10.200">
    <property type="match status" value="1"/>
</dbReference>
<dbReference type="Gene3D" id="1.10.1200.30">
    <property type="match status" value="1"/>
</dbReference>
<dbReference type="Gene3D" id="3.30.70.270">
    <property type="match status" value="3"/>
</dbReference>
<dbReference type="Gene3D" id="2.40.70.10">
    <property type="entry name" value="Acid Proteases"/>
    <property type="match status" value="1"/>
</dbReference>
<dbReference type="Gene3D" id="3.10.10.10">
    <property type="entry name" value="HIV Type 1 Reverse Transcriptase, subunit A, domain 1"/>
    <property type="match status" value="1"/>
</dbReference>
<dbReference type="Gene3D" id="1.10.375.10">
    <property type="entry name" value="Human Immunodeficiency Virus Type 1 Capsid Protein"/>
    <property type="match status" value="1"/>
</dbReference>
<dbReference type="Gene3D" id="1.10.150.90">
    <property type="entry name" value="Immunodeficiency lentiviruses, gag gene matrix protein p17"/>
    <property type="match status" value="1"/>
</dbReference>
<dbReference type="Gene3D" id="2.30.30.10">
    <property type="entry name" value="Integrase, C-terminal domain superfamily, retroviral"/>
    <property type="match status" value="1"/>
</dbReference>
<dbReference type="Gene3D" id="3.30.420.10">
    <property type="entry name" value="Ribonuclease H-like superfamily/Ribonuclease H"/>
    <property type="match status" value="2"/>
</dbReference>
<dbReference type="Gene3D" id="1.20.5.760">
    <property type="entry name" value="Single helix bin"/>
    <property type="match status" value="1"/>
</dbReference>
<dbReference type="Gene3D" id="4.10.60.10">
    <property type="entry name" value="Zinc finger, CCHC-type"/>
    <property type="match status" value="1"/>
</dbReference>
<dbReference type="InterPro" id="IPR001969">
    <property type="entry name" value="Aspartic_peptidase_AS"/>
</dbReference>
<dbReference type="InterPro" id="IPR043502">
    <property type="entry name" value="DNA/RNA_pol_sf"/>
</dbReference>
<dbReference type="InterPro" id="IPR045345">
    <property type="entry name" value="Gag_p24_C"/>
</dbReference>
<dbReference type="InterPro" id="IPR017856">
    <property type="entry name" value="Integrase-like_N"/>
</dbReference>
<dbReference type="InterPro" id="IPR036862">
    <property type="entry name" value="Integrase_C_dom_sf_retrovir"/>
</dbReference>
<dbReference type="InterPro" id="IPR001037">
    <property type="entry name" value="Integrase_C_retrovir"/>
</dbReference>
<dbReference type="InterPro" id="IPR001584">
    <property type="entry name" value="Integrase_cat-core"/>
</dbReference>
<dbReference type="InterPro" id="IPR003308">
    <property type="entry name" value="Integrase_Zn-bd_dom_N"/>
</dbReference>
<dbReference type="InterPro" id="IPR000071">
    <property type="entry name" value="Lentvrl_matrix_N"/>
</dbReference>
<dbReference type="InterPro" id="IPR012344">
    <property type="entry name" value="Matrix_HIV/RSV_N"/>
</dbReference>
<dbReference type="InterPro" id="IPR001995">
    <property type="entry name" value="Peptidase_A2_cat"/>
</dbReference>
<dbReference type="InterPro" id="IPR021109">
    <property type="entry name" value="Peptidase_aspartic_dom_sf"/>
</dbReference>
<dbReference type="InterPro" id="IPR034170">
    <property type="entry name" value="Retropepsin-like_cat_dom"/>
</dbReference>
<dbReference type="InterPro" id="IPR018061">
    <property type="entry name" value="Retropepsins"/>
</dbReference>
<dbReference type="InterPro" id="IPR008916">
    <property type="entry name" value="Retrov_capsid_C"/>
</dbReference>
<dbReference type="InterPro" id="IPR008919">
    <property type="entry name" value="Retrov_capsid_N"/>
</dbReference>
<dbReference type="InterPro" id="IPR010999">
    <property type="entry name" value="Retrovr_matrix"/>
</dbReference>
<dbReference type="InterPro" id="IPR043128">
    <property type="entry name" value="Rev_trsase/Diguanyl_cyclase"/>
</dbReference>
<dbReference type="InterPro" id="IPR012337">
    <property type="entry name" value="RNaseH-like_sf"/>
</dbReference>
<dbReference type="InterPro" id="IPR002156">
    <property type="entry name" value="RNaseH_domain"/>
</dbReference>
<dbReference type="InterPro" id="IPR036397">
    <property type="entry name" value="RNaseH_sf"/>
</dbReference>
<dbReference type="InterPro" id="IPR000477">
    <property type="entry name" value="RT_dom"/>
</dbReference>
<dbReference type="InterPro" id="IPR010659">
    <property type="entry name" value="RVT_connect"/>
</dbReference>
<dbReference type="InterPro" id="IPR010661">
    <property type="entry name" value="RVT_thumb"/>
</dbReference>
<dbReference type="InterPro" id="IPR001878">
    <property type="entry name" value="Znf_CCHC"/>
</dbReference>
<dbReference type="InterPro" id="IPR036875">
    <property type="entry name" value="Znf_CCHC_sf"/>
</dbReference>
<dbReference type="PANTHER" id="PTHR41694">
    <property type="entry name" value="ENDOGENOUS RETROVIRUS GROUP K MEMBER POL PROTEIN"/>
    <property type="match status" value="1"/>
</dbReference>
<dbReference type="PANTHER" id="PTHR41694:SF3">
    <property type="entry name" value="RNA-DIRECTED DNA POLYMERASE-RELATED"/>
    <property type="match status" value="1"/>
</dbReference>
<dbReference type="Pfam" id="PF00540">
    <property type="entry name" value="Gag_p17"/>
    <property type="match status" value="1"/>
</dbReference>
<dbReference type="Pfam" id="PF00607">
    <property type="entry name" value="Gag_p24"/>
    <property type="match status" value="1"/>
</dbReference>
<dbReference type="Pfam" id="PF19317">
    <property type="entry name" value="Gag_p24_C"/>
    <property type="match status" value="1"/>
</dbReference>
<dbReference type="Pfam" id="PF00552">
    <property type="entry name" value="IN_DBD_C"/>
    <property type="match status" value="1"/>
</dbReference>
<dbReference type="Pfam" id="PF02022">
    <property type="entry name" value="Integrase_Zn"/>
    <property type="match status" value="1"/>
</dbReference>
<dbReference type="Pfam" id="PF00075">
    <property type="entry name" value="RNase_H"/>
    <property type="match status" value="1"/>
</dbReference>
<dbReference type="Pfam" id="PF00665">
    <property type="entry name" value="rve"/>
    <property type="match status" value="1"/>
</dbReference>
<dbReference type="Pfam" id="PF00077">
    <property type="entry name" value="RVP"/>
    <property type="match status" value="1"/>
</dbReference>
<dbReference type="Pfam" id="PF00078">
    <property type="entry name" value="RVT_1"/>
    <property type="match status" value="1"/>
</dbReference>
<dbReference type="Pfam" id="PF06815">
    <property type="entry name" value="RVT_connect"/>
    <property type="match status" value="1"/>
</dbReference>
<dbReference type="Pfam" id="PF06817">
    <property type="entry name" value="RVT_thumb"/>
    <property type="match status" value="1"/>
</dbReference>
<dbReference type="Pfam" id="PF00098">
    <property type="entry name" value="zf-CCHC"/>
    <property type="match status" value="1"/>
</dbReference>
<dbReference type="PRINTS" id="PR00234">
    <property type="entry name" value="HIV1MATRIX"/>
</dbReference>
<dbReference type="SMART" id="SM00343">
    <property type="entry name" value="ZnF_C2HC"/>
    <property type="match status" value="2"/>
</dbReference>
<dbReference type="SUPFAM" id="SSF50630">
    <property type="entry name" value="Acid proteases"/>
    <property type="match status" value="1"/>
</dbReference>
<dbReference type="SUPFAM" id="SSF50122">
    <property type="entry name" value="DNA-binding domain of retroviral integrase"/>
    <property type="match status" value="1"/>
</dbReference>
<dbReference type="SUPFAM" id="SSF56672">
    <property type="entry name" value="DNA/RNA polymerases"/>
    <property type="match status" value="1"/>
</dbReference>
<dbReference type="SUPFAM" id="SSF46919">
    <property type="entry name" value="N-terminal Zn binding domain of HIV integrase"/>
    <property type="match status" value="1"/>
</dbReference>
<dbReference type="SUPFAM" id="SSF47836">
    <property type="entry name" value="Retroviral matrix proteins"/>
    <property type="match status" value="1"/>
</dbReference>
<dbReference type="SUPFAM" id="SSF47353">
    <property type="entry name" value="Retrovirus capsid dimerization domain-like"/>
    <property type="match status" value="1"/>
</dbReference>
<dbReference type="SUPFAM" id="SSF47943">
    <property type="entry name" value="Retrovirus capsid protein, N-terminal core domain"/>
    <property type="match status" value="1"/>
</dbReference>
<dbReference type="SUPFAM" id="SSF57756">
    <property type="entry name" value="Retrovirus zinc finger-like domains"/>
    <property type="match status" value="1"/>
</dbReference>
<dbReference type="SUPFAM" id="SSF53098">
    <property type="entry name" value="Ribonuclease H-like"/>
    <property type="match status" value="2"/>
</dbReference>
<dbReference type="PROSITE" id="PS50175">
    <property type="entry name" value="ASP_PROT_RETROV"/>
    <property type="match status" value="1"/>
</dbReference>
<dbReference type="PROSITE" id="PS00141">
    <property type="entry name" value="ASP_PROTEASE"/>
    <property type="match status" value="1"/>
</dbReference>
<dbReference type="PROSITE" id="PS50994">
    <property type="entry name" value="INTEGRASE"/>
    <property type="match status" value="1"/>
</dbReference>
<dbReference type="PROSITE" id="PS51027">
    <property type="entry name" value="INTEGRASE_DBD"/>
    <property type="match status" value="1"/>
</dbReference>
<dbReference type="PROSITE" id="PS50879">
    <property type="entry name" value="RNASE_H_1"/>
    <property type="match status" value="1"/>
</dbReference>
<dbReference type="PROSITE" id="PS50878">
    <property type="entry name" value="RT_POL"/>
    <property type="match status" value="1"/>
</dbReference>
<dbReference type="PROSITE" id="PS50158">
    <property type="entry name" value="ZF_CCHC"/>
    <property type="match status" value="2"/>
</dbReference>
<dbReference type="PROSITE" id="PS50876">
    <property type="entry name" value="ZF_INTEGRASE"/>
    <property type="match status" value="1"/>
</dbReference>
<proteinExistence type="evidence at protein level"/>
<sequence>MGARNSVLSGKKADELEKIRLRPGGKKKYMLKHVVWAANELDRFGLAESLLENKEGCQKILSVLAPLVPTGSENLKSLYNTVCVIWCIHAEEKVKHTEEAKQIVQRHLVVETGTAETMPKTSRPTAPSSGRGGNYPVQQIGGNYVHLPLSPRTLNAWVKLIEEKKFGAEVVPGFQALSEGCTPYDINQMLNCVGDHQAAMQIIRDIINEEAADWDLQHPQPAPQQGQLREPSGSDIAGTTSSVDEQIQWMYRQQNPIPVGNIYRRWIQLGLQKCVRMYNPTNILDVKQGPKEPFQSYVDRFYKSLRAEQTDAAVKNWMTQTLLIQNANPDCKLVLKGLGVNPTLEEMLTACQGVGGPGQKARLMAEALKEALAPVPIPFAAAQKRGPRKPIKCWNCGKEGHSARQCRAPRRQGCWKCGKMDHVMAKCPDRQAGFFRPWSMGKEAPQFPHGSSASGADANCSPRGPSCGSAKELHAVGQAAERKQREALQGGDRGFAAPQFSLWRRPVVTAHIEGQPVEVLLDTGADDSIVTGIELGPHYTPKIVGGIGGFINTKEYKNVKIEVLGKRIKGTIMTGDTPINIFGRNLLTALGMSLNLPIAKVEPVKVTLKPGKVGPKLKQWPLSKEKIVALREICEKMEKDGQLEEAPPTNPYNTPTFAIKKKDKNKWRMLIDFRELNRVTQDFTEVQLGIPHPAGLAKRKRITVLDIGDAYFSIPLDEEFRQYTAFTLPSVNNAEPGKRYIYKVLPQGWKGSPAIFQYTMRHVLEPFRKANPDVTLVQYMDDILIASDRTDLEHDRVVLQLKELLNSIGFSTPEEKFQKDPPFQWMGYELWPTKWKLQKIELPQRETWTVNDIQKLVGVLNWAAQIYPGIKTKHLCRLIRGKMTLTEEVQWTEMAEAEYEENKIILSQEQEGCYYQEGKPLEATVIKSQDNQWSYKIHQEDKILKVGKFAKIKNTHTNGVRLLAHVIQKIGKEAIVIWGQVPKFHLPVERDVWEQWWTDYWQVTWIPEWDFISTPPLVRLVFNLVKDPIEGEETYYTDGSCNKQSKEGKAGYITDRGKDKVKVLEQTTNQQAELEAFLMALTDSGPKTNIIVDSQYVMGIITGCPTESESRLVNQIIEEMIKKSEIYVAWVPAHKGIGGNQEIDHLVSQGIRQVLFLEKIEPAQEEHDKYHSNVKELVFKFGLPRIVARQIVDTCDKCHQKGEAIHGQVNSDLGTWQMDCTHLEGKIVIVAVHVASGFIEAEVIPQETGRQTALFLLKLAGRWPITHLHTDNGANFASQEVKMVAWWAGIEHTFGVPYNPQSQGVVEAMNHHLKNQIDRIREQANSVETIVLMAVHCMNFKRRGGIGDMTPAERLINMITTEQEIQFQQSKNSKFKNFRVYYREGRDQLWKGPGELLWKGEGAVILKVGTDIKVVPRRKAKIIKDYGGGKEVDSSSHMEDTGEAREVA</sequence>
<gene>
    <name type="primary">gag-pol</name>
</gene>
<organismHost>
    <name type="scientific">Cercopithecidae</name>
    <name type="common">Old World monkeys</name>
    <dbReference type="NCBI Taxonomy" id="9527"/>
</organismHost>
<comment type="function">
    <text evidence="1">Gag-Pol polyprotein and Gag polyprotein may regulate their own translation, by the binding genomic RNA in the 5'-UTR. At low concentration, Gag-Pol and Gag would promote translation, whereas at high concentration, the polyproteins encapsidate genomic RNA and then shut off translation (By similarity).</text>
</comment>
<comment type="function">
    <text evidence="1">Matrix protein p17 has two main functions: in infected cell, it targets Gag and Gag-pol polyproteins to the plasma membrane via a multipartite membrane-binding signal, that includes its myristointegration complex. The myristoylation signal and the NLS exert conflicting influences its subcellular localization. The key regulation of these motifs might be phosphorylation of a portion of MA molecules on the C-terminal tyrosine at the time of virus maturation, by virion-associated cellular tyrosine kinase. Implicated in the release from host cell mediated by Vpu (By similarity).</text>
</comment>
<comment type="function">
    <text evidence="1">Capsid protein p24 forms the conical core that encapsulates the genomic RNA-nucleocapsid complex in the virion. The core is constituted by capsid protein hexamer subunits. The core is disassembled soon after virion entry. Interaction with host PPIA/CYPA protects the virus from restriction by host TRIM5-alpha and from an unknown antiviral activity in host cells. This capsid restriction by TRIM5 is one of the factors which restricts SIV to the simian species (By similarity).</text>
</comment>
<comment type="function">
    <text evidence="1">Nucleocapsid protein p7 encapsulates and protects viral dimeric unspliced (genomic) RNA. Binds these RNAs through its zinc fingers. Facilitates rearangement of nucleic acid secondary structure during retrotranscription of genomic RNA. This capability is referred to as nucleic acid chaperone activity (By similarity).</text>
</comment>
<comment type="function">
    <text evidence="10">The aspartyl protease mediates proteolytic cleavages of Gag and Gag-Pol polyproteins during or shortly after the release of the virion from the plasma membrane. Cleavages take place as an ordered, step-wise cascade to yield mature proteins. This process is called maturation. Displays maximal activity during the budding process just prior to particle release from the cell. Also cleaves Nef and Vif, probably concomitantly with viral structural proteins on maturation of virus particles. Hydrolyzes host EIF4GI and PABP1 in order to shut off the capped cellular mRNA translation. The resulting inhibition of cellular protein synthesis serves to ensure maximal viral gene expression and to evade host immune response (By similarity).</text>
</comment>
<comment type="function">
    <text evidence="1">Reverse transcriptase/ribonuclease H (RT) is a multifunctional enzyme that converts the viral dimeric RNA genome into dsDNA in the cytoplasm, shortly after virus entry into the cell. This enzyme displays a DNA polymerase activity that can copy either DNA or RNA templates, and a ribonuclease H (RNase H) activity that cleaves the RNA strand of RNA-DNA heteroduplexes in a partially processive 3' to 5' endonucleasic mode. Conversion of viral genomic RNA into dsDNA requires many steps. A tRNA binds to the primer-binding site (PBS) situated at the 5'-end of the viral RNA. RT uses the 3' end of the tRNA primer to perform a short round of RNA-dependent minus-strand DNA synthesis. The reading proceeds through the U5 region and ends after the repeated (R) region which is present at both ends of viral RNA. The portion of the RNA-DNA heteroduplex is digested by the RNase H, resulting in a ssDNA product attached to the tRNA primer. This ssDNA/tRNA hybridizes with the identical R region situated at the 3' end of viral RNA. This template exchange, known as minus-strand DNA strong stop transfer, can be either intra- or intermolecular. RT uses the 3' end of this newly synthesized short ssDNA to perform the RNA-dependent minus-strand DNA synthesis of the whole template. RNase H digests the RNA template except for two polypurine tracts (PPTs) situated at the 5'-end and near the center of the genome. It is not clear if both polymerase and RNase H activities are simultaneous. RNase H can probably proceed both in a polymerase-dependent (RNA cut into small fragments by the same RT performing DNA synthesis) and a polymerase-independent mode (cleavage of remaining RNA fragments by free RTs). Secondly, RT performs DNA-directed plus-strand DNA synthesis using the PPTs that have not been removed by RNase H as primers. PPTs and tRNA primers are then removed by RNase H. The 3' and 5' ssDNA PBS regions hybridize to form a circular dsDNA intermediate. Strand displacement synthesis by RT to the PBS and PPT ends produces a blunt ended, linear dsDNA copy of the viral genome that includes long terminal repeats (LTRs) at both ends (By similarity).</text>
</comment>
<comment type="function">
    <text evidence="1">Integrase catalyzes viral DNA integration into the host chromosome, by performing a series of DNA cutting and joining reactions. This enzyme activity takes place after virion entry into a cell and reverse transcription of the RNA genome in dsDNA. The first step in the integration process is 3' processing. This step requires a complex comprising the viral genome, matrix protein, Vpr and integrase. This complex is called the pre-integration complex (PIC). The integrase protein removes 2 nucleotides from each 3' end of the viral DNA, leaving recessed CA OH's at the 3' ends. In the second step, the PIC enters cell nucleus. This process is mediated through integrase and Vpr proteins, and allows the virus to infect a non dividing cell. This ability to enter the nucleus is specific of lentiviruses, other retroviruses cannot and rely on cell division to access cell chromosomes. In the third step, termed strand transfer, the integrase protein joins the previously processed 3' ends to the 5' ends of strands of target cellular DNA at the site of integration. The 5'-ends are produced by integrase-catalyzed staggered cuts, 5 bp apart. A Y-shaped, gapped, recombination intermediate results, with the 5'-ends of the viral DNA strands and the 3' ends of target DNA strands remaining unjoined, flanking a gap of 5 bp. The last step is viral DNA integration into host chromosome. This involves host DNA repair synthesis in which the 5 bp gaps between the unjoined strands are filled in and then ligated. Since this process occurs at both cuts flanking the SIV genome, a 5 bp duplication of host DNA is produced at the ends of SIV integration. Alternatively, Integrase may catalyze the excision of viral DNA just after strand transfer, this is termed disintegration (By similarity).</text>
</comment>
<comment type="catalytic activity">
    <reaction evidence="10">
        <text>Specific for a P1 residue that is hydrophobic, and P1' variable, but often Pro.</text>
        <dbReference type="EC" id="3.4.23.16"/>
    </reaction>
</comment>
<comment type="catalytic activity">
    <reaction>
        <text>Endohydrolysis of RNA in RNA/DNA hybrids. Three different cleavage modes: 1. sequence-specific internal cleavage of RNA. Human immunodeficiency virus type 1 and Moloney murine leukemia virus enzymes prefer to cleave the RNA strand one nucleotide away from the RNA-DNA junction. 2. RNA 5'-end directed cleavage 13-19 nucleotides from the RNA end. 3. DNA 3'-end directed cleavage 15-20 nucleotides away from the primer terminus.</text>
        <dbReference type="EC" id="3.1.26.13"/>
    </reaction>
</comment>
<comment type="catalytic activity">
    <reaction>
        <text>3'-end directed exonucleolytic cleavage of viral RNA-DNA hybrid.</text>
        <dbReference type="EC" id="3.1.13.2"/>
    </reaction>
</comment>
<comment type="catalytic activity">
    <reaction evidence="11">
        <text>DNA(n) + a 2'-deoxyribonucleoside 5'-triphosphate = DNA(n+1) + diphosphate</text>
        <dbReference type="Rhea" id="RHEA:22508"/>
        <dbReference type="Rhea" id="RHEA-COMP:17339"/>
        <dbReference type="Rhea" id="RHEA-COMP:17340"/>
        <dbReference type="ChEBI" id="CHEBI:33019"/>
        <dbReference type="ChEBI" id="CHEBI:61560"/>
        <dbReference type="ChEBI" id="CHEBI:173112"/>
        <dbReference type="EC" id="2.7.7.49"/>
    </reaction>
</comment>
<comment type="catalytic activity">
    <reaction evidence="11">
        <text>DNA(n) + a 2'-deoxyribonucleoside 5'-triphosphate = DNA(n+1) + diphosphate</text>
        <dbReference type="Rhea" id="RHEA:22508"/>
        <dbReference type="Rhea" id="RHEA-COMP:17339"/>
        <dbReference type="Rhea" id="RHEA-COMP:17340"/>
        <dbReference type="ChEBI" id="CHEBI:33019"/>
        <dbReference type="ChEBI" id="CHEBI:61560"/>
        <dbReference type="ChEBI" id="CHEBI:173112"/>
        <dbReference type="EC" id="2.7.7.7"/>
    </reaction>
</comment>
<comment type="cofactor">
    <cofactor evidence="1">
        <name>Mg(2+)</name>
        <dbReference type="ChEBI" id="CHEBI:18420"/>
    </cofactor>
    <text evidence="1">Binds 2 magnesium ions for reverse transcriptase polymerase activity.</text>
</comment>
<comment type="cofactor">
    <cofactor evidence="1">
        <name>Mg(2+)</name>
        <dbReference type="ChEBI" id="CHEBI:18420"/>
    </cofactor>
    <text evidence="1">Binds 2 magnesium ions for ribonuclease H (RNase H) activity. Substrate-binding is a precondition for magnesium binding.</text>
</comment>
<comment type="cofactor">
    <cofactor evidence="1">
        <name>Mg(2+)</name>
        <dbReference type="ChEBI" id="CHEBI:18420"/>
    </cofactor>
    <text evidence="1">Magnesium ions are required for integrase activity. Binds at least 1, maybe 2 magnesium ions.</text>
</comment>
<comment type="activity regulation">
    <text>The viral protease is inhibited by many synthetic protease inhibitors (PIs), such as amprenavir, atazanavir, indinavir, loprinavir, nelfinavir, ritonavir and saquinavir. RT can be inhibited either by nucleoside RT inhibitors (NRTIs) or by non nucleoside RT inhibitors (NNRTIs). NRTIs act as chain terminators, whereas NNRTIs inhibit DNA polymerization by binding a small hydrophobic pocket near the RT active site and inducing an allosteric change in this region. Classical NRTIs are abacavir, adefovir (PMEA), didanosine (ddI), lamivudine (3TC), stavudine (d4T), tenofovir (PMPA), zalcitabine (ddC), and zidovudine (AZT). Classical NNRTIs are atevirdine (BHAP U-87201E), delavirdine, efavirenz (DMP-266), emivirine (I-EBU), and nevirapine (BI-RG-587). The tritherapies used as a basic effective treatment of AIDS associate two NRTIs and one NNRTI. Use of protease inhibitors in tritherapy regimens permit more ambitious therapeutic strategies.</text>
</comment>
<comment type="subunit">
    <molecule>Matrix protein p17</molecule>
    <text evidence="5 6">Homotrimer. Interacts with gp41 (via C-terminus).</text>
</comment>
<comment type="subunit">
    <molecule>Protease</molecule>
    <text evidence="4 7">Homodimer. The active site consists of two apposed aspartic acid residues.</text>
</comment>
<comment type="subunit">
    <molecule>Reverse transcriptase/ribonuclease H</molecule>
    <text evidence="2">Heterodimer of p66 RT and p51 RT (RT p66/p51). Heterodimerization of RT is essential for DNA polymerase activity. Despite the sequence identities, p66 RT and p51 RT have distinct folding.</text>
</comment>
<comment type="subunit">
    <molecule>Integrase</molecule>
    <text evidence="3">Homotetramer; may further associate as a homohexadecamer (By similarity).</text>
</comment>
<comment type="subcellular location">
    <molecule>Matrix protein p17</molecule>
    <subcellularLocation>
        <location evidence="18">Virion</location>
    </subcellularLocation>
    <subcellularLocation>
        <location evidence="1">Host nucleus</location>
    </subcellularLocation>
    <subcellularLocation>
        <location evidence="1">Host cytoplasm</location>
    </subcellularLocation>
    <subcellularLocation>
        <location evidence="18">Host cell membrane</location>
        <topology evidence="18">Lipid-anchor</topology>
    </subcellularLocation>
    <text evidence="1">Following virus entry, the nuclear localization signal (NLS) of the matrix protein participates with Vpr to the nuclear localization of the viral genome. During virus production, the nuclear export activity of the matrix protein counteracts the NLS to maintain the Gag and Gag-Pol polyproteins in the cytoplasm, thereby directing unspliced RNA to the plasma membrane (By similarity).</text>
</comment>
<comment type="subcellular location">
    <molecule>Capsid protein p24</molecule>
    <subcellularLocation>
        <location evidence="18">Virion</location>
    </subcellularLocation>
</comment>
<comment type="subcellular location">
    <molecule>Nucleocapsid protein p7</molecule>
    <subcellularLocation>
        <location evidence="18">Virion</location>
    </subcellularLocation>
</comment>
<comment type="subcellular location">
    <molecule>Reverse transcriptase/ribonuclease H</molecule>
    <subcellularLocation>
        <location evidence="18">Virion</location>
    </subcellularLocation>
</comment>
<comment type="subcellular location">
    <molecule>Integrase</molecule>
    <subcellularLocation>
        <location evidence="18">Virion</location>
    </subcellularLocation>
    <subcellularLocation>
        <location evidence="18">Host nucleus</location>
    </subcellularLocation>
    <subcellularLocation>
        <location evidence="18">Host cytoplasm</location>
    </subcellularLocation>
    <text evidence="18">Nuclear at initial phase, cytoplasmic at assembly.</text>
</comment>
<comment type="alternative products">
    <event type="ribosomal frameshifting"/>
    <isoform>
        <id>P05897-1</id>
        <name>Gag-Pol polyprotein</name>
        <sequence type="displayed"/>
    </isoform>
    <isoform>
        <id>P05893-1</id>
        <name>Gag polyprotein</name>
        <sequence type="external"/>
    </isoform>
    <text>Translation results in the formation of the Gag polyprotein most of the time. Ribosomal frameshifting at the gag-pol genes boundary occurs at low frequency and produces the Gag-Pol polyprotein. This strategy of translation probably allows the virus to modulate the quantity of each viral protein. Maintenance of a correct Gag to Gag-Pol ratio is essential for RNA dimerization and viral infectivity.</text>
</comment>
<comment type="domain">
    <text evidence="1">The p66 RT is structured in five subdomains: finger, palm, thumb, connection and RNase H. Within the palm subdomain, the 'primer grip' region is thought to be involved in the positioning of the primer terminus for accommodating the incoming nucleotide. The RNase H domain stabilizes the association of RT with primer-template (By similarity).</text>
</comment>
<comment type="domain">
    <text evidence="1">The tryptophan repeat motif is involved in RT p66/p51 dimerization.</text>
</comment>
<comment type="PTM">
    <text evidence="11">Specific enzymatic cleavages by the viral protease yield mature proteins. The protease is released by autocatalytic cleavage. The polyprotein is cleaved during and after budding, this process is termed maturation. Proteolytic cleavage of p66 RT removes the RNase H domain to yield the p51 RT subunit.</text>
</comment>
<comment type="PTM">
    <text>Capsid protein p24 is phosphorylated.</text>
</comment>
<comment type="miscellaneous">
    <text>This is probably a macaque isolate.</text>
</comment>
<comment type="miscellaneous">
    <text>The reverse transcriptase is an error-prone enzyme that lacks a proof-reading function. High mutations rate is a direct consequence of this characteristic. RT also displays frequent template switching leading to high recombination rate. Recombination mostly occurs between homologous regions of the two copackaged RNA genomes. If these two RNA molecules derive from different viral strains, reverse transcription will give rise to highly recombinated proviral DNAs.</text>
</comment>
<comment type="miscellaneous">
    <molecule>Isoform Gag-Pol polyprotein</molecule>
    <text>Produced by -1 ribosomal frameshifting.</text>
</comment>
<feature type="initiator methionine" description="Removed; by host" evidence="1">
    <location>
        <position position="1"/>
    </location>
</feature>
<feature type="chain" id="PRO_0000306045" description="Gag-Pol polyprotein">
    <location>
        <begin position="2"/>
        <end position="1448"/>
    </location>
</feature>
<feature type="chain" id="PRO_0000306046" description="Matrix protein p17" evidence="1">
    <location>
        <begin position="2"/>
        <end position="135"/>
    </location>
</feature>
<feature type="chain" id="PRO_0000306047" description="Capsid protein p24" evidence="1">
    <location>
        <begin position="136"/>
        <end position="364"/>
    </location>
</feature>
<feature type="chain" id="PRO_0000306048" description="Nucleocapsid protein p7" evidence="1">
    <location>
        <begin position="365"/>
        <end position="433"/>
    </location>
</feature>
<feature type="chain" id="PRO_0000306049" description="p6-pol" evidence="8">
    <location>
        <begin position="434"/>
        <end position="500"/>
    </location>
</feature>
<feature type="chain" id="PRO_0000306050" description="Protease" evidence="1">
    <location>
        <begin position="501"/>
        <end position="596"/>
    </location>
</feature>
<feature type="chain" id="PRO_0000306051" description="Reverse transcriptase/ribonuclease H" evidence="1">
    <location>
        <begin position="597"/>
        <end position="1155"/>
    </location>
</feature>
<feature type="chain" id="PRO_0000306052" description="p51 RT" evidence="1">
    <location>
        <begin position="597"/>
        <end position="1035"/>
    </location>
</feature>
<feature type="chain" id="PRO_0000306053" description="p15" evidence="1">
    <location>
        <begin position="1036"/>
        <end position="1155"/>
    </location>
</feature>
<feature type="chain" id="PRO_0000306054" description="Integrase" evidence="1">
    <location>
        <begin position="1156"/>
        <end position="1448"/>
    </location>
</feature>
<feature type="domain" description="Peptidase A2" evidence="10">
    <location>
        <begin position="517"/>
        <end position="586"/>
    </location>
</feature>
<feature type="domain" description="Reverse transcriptase" evidence="11">
    <location>
        <begin position="640"/>
        <end position="830"/>
    </location>
</feature>
<feature type="domain" description="RNase H type-1" evidence="12">
    <location>
        <begin position="1029"/>
        <end position="1152"/>
    </location>
</feature>
<feature type="domain" description="Integrase catalytic" evidence="14">
    <location>
        <begin position="1209"/>
        <end position="1359"/>
    </location>
</feature>
<feature type="zinc finger region" description="CCHC-type 1" evidence="9">
    <location>
        <begin position="391"/>
        <end position="408"/>
    </location>
</feature>
<feature type="zinc finger region" description="CCHC-type 2" evidence="9">
    <location>
        <begin position="412"/>
        <end position="429"/>
    </location>
</feature>
<feature type="zinc finger region" description="Integrase-type" evidence="13">
    <location>
        <begin position="1158"/>
        <end position="1199"/>
    </location>
</feature>
<feature type="DNA-binding region" description="Integrase-type" evidence="15">
    <location>
        <begin position="1378"/>
        <end position="1425"/>
    </location>
</feature>
<feature type="region of interest" description="Disordered" evidence="17">
    <location>
        <begin position="114"/>
        <end position="133"/>
    </location>
</feature>
<feature type="region of interest" description="Disordered" evidence="17">
    <location>
        <begin position="217"/>
        <end position="239"/>
    </location>
</feature>
<feature type="region of interest" description="Disordered" evidence="17">
    <location>
        <begin position="443"/>
        <end position="464"/>
    </location>
</feature>
<feature type="region of interest" description="RT 'primer grip'" evidence="1">
    <location>
        <begin position="823"/>
        <end position="831"/>
    </location>
</feature>
<feature type="region of interest" description="Disordered" evidence="17">
    <location>
        <begin position="1426"/>
        <end position="1448"/>
    </location>
</feature>
<feature type="short sequence motif" description="Nuclear export signal" evidence="1">
    <location>
        <begin position="16"/>
        <end position="22"/>
    </location>
</feature>
<feature type="short sequence motif" description="Nuclear localization signal" evidence="1">
    <location>
        <begin position="26"/>
        <end position="32"/>
    </location>
</feature>
<feature type="short sequence motif" description="Tryptophan repeat motif" evidence="1">
    <location>
        <begin position="993"/>
        <end position="1009"/>
    </location>
</feature>
<feature type="compositionally biased region" description="Polar residues" evidence="17">
    <location>
        <begin position="119"/>
        <end position="128"/>
    </location>
</feature>
<feature type="active site" description="For protease activity; shared with dimeric partner" evidence="16">
    <location>
        <position position="522"/>
    </location>
</feature>
<feature type="binding site" evidence="1">
    <location>
        <position position="706"/>
    </location>
    <ligand>
        <name>Mg(2+)</name>
        <dbReference type="ChEBI" id="CHEBI:18420"/>
        <label>1</label>
        <note>catalytic; for reverse transcriptase activity</note>
    </ligand>
</feature>
<feature type="binding site" evidence="1">
    <location>
        <position position="781"/>
    </location>
    <ligand>
        <name>Mg(2+)</name>
        <dbReference type="ChEBI" id="CHEBI:18420"/>
        <label>1</label>
        <note>catalytic; for reverse transcriptase activity</note>
    </ligand>
</feature>
<feature type="binding site" evidence="1">
    <location>
        <position position="782"/>
    </location>
    <ligand>
        <name>Mg(2+)</name>
        <dbReference type="ChEBI" id="CHEBI:18420"/>
        <label>1</label>
        <note>catalytic; for reverse transcriptase activity</note>
    </ligand>
</feature>
<feature type="binding site" evidence="1">
    <location>
        <position position="1038"/>
    </location>
    <ligand>
        <name>Mg(2+)</name>
        <dbReference type="ChEBI" id="CHEBI:18420"/>
        <label>2</label>
        <note>catalytic; for RNase H activity</note>
    </ligand>
</feature>
<feature type="binding site" evidence="1">
    <location>
        <position position="1073"/>
    </location>
    <ligand>
        <name>Mg(2+)</name>
        <dbReference type="ChEBI" id="CHEBI:18420"/>
        <label>2</label>
        <note>catalytic; for RNase H activity</note>
    </ligand>
</feature>
<feature type="binding site" evidence="13">
    <location>
        <position position="1167"/>
    </location>
    <ligand>
        <name>Zn(2+)</name>
        <dbReference type="ChEBI" id="CHEBI:29105"/>
    </ligand>
</feature>
<feature type="binding site" evidence="13">
    <location>
        <position position="1171"/>
    </location>
    <ligand>
        <name>Zn(2+)</name>
        <dbReference type="ChEBI" id="CHEBI:29105"/>
    </ligand>
</feature>
<feature type="binding site" evidence="13">
    <location>
        <position position="1195"/>
    </location>
    <ligand>
        <name>Zn(2+)</name>
        <dbReference type="ChEBI" id="CHEBI:29105"/>
    </ligand>
</feature>
<feature type="binding site" evidence="13">
    <location>
        <position position="1198"/>
    </location>
    <ligand>
        <name>Zn(2+)</name>
        <dbReference type="ChEBI" id="CHEBI:29105"/>
    </ligand>
</feature>
<feature type="binding site" evidence="11 12 14">
    <location>
        <position position="1219"/>
    </location>
    <ligand>
        <name>Mg(2+)</name>
        <dbReference type="ChEBI" id="CHEBI:18420"/>
        <label>3</label>
        <note>catalytic; for integrase activity</note>
    </ligand>
</feature>
<feature type="site" description="Cleavage; by viral protease" evidence="1">
    <location>
        <begin position="135"/>
        <end position="136"/>
    </location>
</feature>
<feature type="site" description="Cleavage; by viral protease" evidence="1">
    <location>
        <begin position="364"/>
        <end position="365"/>
    </location>
</feature>
<feature type="site" description="Cleavage; by viral protease" evidence="1">
    <location>
        <begin position="433"/>
        <end position="434"/>
    </location>
</feature>
<feature type="site" description="Cleavage; by viral protease" evidence="1">
    <location>
        <begin position="500"/>
        <end position="501"/>
    </location>
</feature>
<feature type="site" description="Cleavage; by viral protease" evidence="1">
    <location>
        <begin position="596"/>
        <end position="597"/>
    </location>
</feature>
<feature type="site" description="Essential for RT p66/p51 heterodimerization" evidence="1">
    <location>
        <position position="996"/>
    </location>
</feature>
<feature type="site" description="Essential for RT p66/p51 heterodimerization" evidence="1">
    <location>
        <position position="1009"/>
    </location>
</feature>
<feature type="site" description="Cleavage; by viral protease" evidence="1">
    <location>
        <begin position="1035"/>
        <end position="1036"/>
    </location>
</feature>
<feature type="site" description="Cleavage; by viral protease" evidence="1">
    <location>
        <begin position="1155"/>
        <end position="1156"/>
    </location>
</feature>
<feature type="lipid moiety-binding region" description="N-myristoyl glycine; by host" evidence="1">
    <location>
        <position position="2"/>
    </location>
</feature>
<feature type="helix" evidence="19">
    <location>
        <begin position="10"/>
        <end position="16"/>
    </location>
</feature>
<feature type="strand" evidence="19">
    <location>
        <begin position="19"/>
        <end position="24"/>
    </location>
</feature>
<feature type="helix" evidence="19">
    <location>
        <begin position="31"/>
        <end position="43"/>
    </location>
</feature>
<feature type="helix" evidence="19">
    <location>
        <begin position="48"/>
        <end position="52"/>
    </location>
</feature>
<feature type="helix" evidence="19">
    <location>
        <begin position="54"/>
        <end position="64"/>
    </location>
</feature>
<feature type="helix" evidence="19">
    <location>
        <begin position="65"/>
        <end position="70"/>
    </location>
</feature>
<feature type="helix" evidence="19">
    <location>
        <begin position="73"/>
        <end position="89"/>
    </location>
</feature>
<feature type="helix" evidence="19">
    <location>
        <begin position="97"/>
        <end position="108"/>
    </location>
</feature>
<evidence type="ECO:0000250" key="1"/>
<evidence type="ECO:0000250" key="2">
    <source>
        <dbReference type="UniProtKB" id="P03366"/>
    </source>
</evidence>
<evidence type="ECO:0000250" key="3">
    <source>
        <dbReference type="UniProtKB" id="P03367"/>
    </source>
</evidence>
<evidence type="ECO:0000250" key="4">
    <source>
        <dbReference type="UniProtKB" id="P04585"/>
    </source>
</evidence>
<evidence type="ECO:0000250" key="5">
    <source>
        <dbReference type="UniProtKB" id="P04591"/>
    </source>
</evidence>
<evidence type="ECO:0000250" key="6">
    <source>
        <dbReference type="UniProtKB" id="P12493"/>
    </source>
</evidence>
<evidence type="ECO:0000250" key="7">
    <source>
        <dbReference type="UniProtKB" id="P12497"/>
    </source>
</evidence>
<evidence type="ECO:0000255" key="8"/>
<evidence type="ECO:0000255" key="9">
    <source>
        <dbReference type="PROSITE-ProRule" id="PRU00047"/>
    </source>
</evidence>
<evidence type="ECO:0000255" key="10">
    <source>
        <dbReference type="PROSITE-ProRule" id="PRU00275"/>
    </source>
</evidence>
<evidence type="ECO:0000255" key="11">
    <source>
        <dbReference type="PROSITE-ProRule" id="PRU00405"/>
    </source>
</evidence>
<evidence type="ECO:0000255" key="12">
    <source>
        <dbReference type="PROSITE-ProRule" id="PRU00408"/>
    </source>
</evidence>
<evidence type="ECO:0000255" key="13">
    <source>
        <dbReference type="PROSITE-ProRule" id="PRU00450"/>
    </source>
</evidence>
<evidence type="ECO:0000255" key="14">
    <source>
        <dbReference type="PROSITE-ProRule" id="PRU00457"/>
    </source>
</evidence>
<evidence type="ECO:0000255" key="15">
    <source>
        <dbReference type="PROSITE-ProRule" id="PRU00506"/>
    </source>
</evidence>
<evidence type="ECO:0000255" key="16">
    <source>
        <dbReference type="PROSITE-ProRule" id="PRU10094"/>
    </source>
</evidence>
<evidence type="ECO:0000256" key="17">
    <source>
        <dbReference type="SAM" id="MobiDB-lite"/>
    </source>
</evidence>
<evidence type="ECO:0000305" key="18"/>
<evidence type="ECO:0007829" key="19">
    <source>
        <dbReference type="PDB" id="1ED1"/>
    </source>
</evidence>
<protein>
    <recommendedName>
        <fullName>Gag-Pol polyprotein</fullName>
    </recommendedName>
    <alternativeName>
        <fullName>Pr160Gag-Pol</fullName>
    </alternativeName>
    <component>
        <recommendedName>
            <fullName>Matrix protein p17</fullName>
            <shortName>MA</shortName>
        </recommendedName>
    </component>
    <component>
        <recommendedName>
            <fullName>Capsid protein p24</fullName>
            <shortName>CA</shortName>
        </recommendedName>
    </component>
    <component>
        <recommendedName>
            <fullName>Nucleocapsid protein p7</fullName>
            <shortName>NC</shortName>
        </recommendedName>
    </component>
    <component>
        <recommendedName>
            <fullName>p6-pol</fullName>
            <shortName>p6*</shortName>
        </recommendedName>
    </component>
    <component>
        <recommendedName>
            <fullName>Protease</fullName>
            <ecNumber>3.4.23.16</ecNumber>
        </recommendedName>
        <alternativeName>
            <fullName>PR</fullName>
        </alternativeName>
        <alternativeName>
            <fullName>Retropepsin</fullName>
        </alternativeName>
    </component>
    <component>
        <recommendedName>
            <fullName>Reverse transcriptase/ribonuclease H</fullName>
            <ecNumber>2.7.7.49</ecNumber>
            <ecNumber>2.7.7.7</ecNumber>
            <ecNumber>3.1.26.13</ecNumber>
        </recommendedName>
        <alternativeName>
            <fullName>Exoribonuclease H</fullName>
            <ecNumber>3.1.13.2</ecNumber>
        </alternativeName>
        <alternativeName>
            <fullName>p66 RT</fullName>
        </alternativeName>
    </component>
    <component>
        <recommendedName>
            <fullName>p51 RT</fullName>
        </recommendedName>
    </component>
    <component>
        <recommendedName>
            <fullName>p15</fullName>
        </recommendedName>
    </component>
    <component>
        <recommendedName>
            <fullName>Integrase</fullName>
            <shortName>IN</shortName>
            <ecNumber evidence="4">2.7.7.-</ecNumber>
            <ecNumber evidence="4">3.1.-.-</ecNumber>
        </recommendedName>
    </component>
</protein>
<reference key="1">
    <citation type="journal article" date="1988" name="Nature">
        <title>Comparison of simian immunodeficiency virus isolates.</title>
        <authorList>
            <person name="Kestler H.W."/>
            <person name="Li Y."/>
            <person name="Naidu Y.M."/>
            <person name="Butler C.V."/>
            <person name="Ochs M.F."/>
            <person name="Jaenel G."/>
            <person name="King N.W."/>
            <person name="Daniel M.D."/>
            <person name="Desrosiers R.C."/>
        </authorList>
    </citation>
    <scope>NUCLEOTIDE SEQUENCE [GENOMIC DNA]</scope>
</reference>
<keyword id="KW-0002">3D-structure</keyword>
<keyword id="KW-0064">Aspartyl protease</keyword>
<keyword id="KW-0167">Capsid protein</keyword>
<keyword id="KW-0229">DNA integration</keyword>
<keyword id="KW-0233">DNA recombination</keyword>
<keyword id="KW-0238">DNA-binding</keyword>
<keyword id="KW-0239">DNA-directed DNA polymerase</keyword>
<keyword id="KW-0255">Endonuclease</keyword>
<keyword id="KW-1262">Eukaryotic host gene expression shutoff by virus</keyword>
<keyword id="KW-1193">Eukaryotic host translation shutoff by virus</keyword>
<keyword id="KW-1032">Host cell membrane</keyword>
<keyword id="KW-1035">Host cytoplasm</keyword>
<keyword id="KW-1190">Host gene expression shutoff by virus</keyword>
<keyword id="KW-1043">Host membrane</keyword>
<keyword id="KW-1048">Host nucleus</keyword>
<keyword id="KW-0945">Host-virus interaction</keyword>
<keyword id="KW-0378">Hydrolase</keyword>
<keyword id="KW-0449">Lipoprotein</keyword>
<keyword id="KW-0460">Magnesium</keyword>
<keyword id="KW-0472">Membrane</keyword>
<keyword id="KW-0479">Metal-binding</keyword>
<keyword id="KW-0511">Multifunctional enzyme</keyword>
<keyword id="KW-0519">Myristate</keyword>
<keyword id="KW-0540">Nuclease</keyword>
<keyword id="KW-0548">Nucleotidyltransferase</keyword>
<keyword id="KW-0597">Phosphoprotein</keyword>
<keyword id="KW-0645">Protease</keyword>
<keyword id="KW-0677">Repeat</keyword>
<keyword id="KW-0688">Ribosomal frameshifting</keyword>
<keyword id="KW-0694">RNA-binding</keyword>
<keyword id="KW-0695">RNA-directed DNA polymerase</keyword>
<keyword id="KW-0808">Transferase</keyword>
<keyword id="KW-1179">Viral genome integration</keyword>
<keyword id="KW-0543">Viral nucleoprotein</keyword>
<keyword id="KW-1163">Viral penetration into host nucleus</keyword>
<keyword id="KW-1188">Viral release from host cell</keyword>
<keyword id="KW-0946">Virion</keyword>
<keyword id="KW-0917">Virion maturation</keyword>
<keyword id="KW-1160">Virus entry into host cell</keyword>
<keyword id="KW-0862">Zinc</keyword>
<keyword id="KW-0863">Zinc-finger</keyword>